<gene>
    <name evidence="4" type="primary">mod</name>
    <name type="ordered locus">HI_1058/HI_1056</name>
</gene>
<name>T3MH_HAEIN</name>
<reference key="1">
    <citation type="journal article" date="1995" name="Science">
        <title>Whole-genome random sequencing and assembly of Haemophilus influenzae Rd.</title>
        <authorList>
            <person name="Fleischmann R.D."/>
            <person name="Adams M.D."/>
            <person name="White O."/>
            <person name="Clayton R.A."/>
            <person name="Kirkness E.F."/>
            <person name="Kerlavage A.R."/>
            <person name="Bult C.J."/>
            <person name="Tomb J.-F."/>
            <person name="Dougherty B.A."/>
            <person name="Merrick J.M."/>
            <person name="McKenney K."/>
            <person name="Sutton G.G."/>
            <person name="FitzHugh W."/>
            <person name="Fields C.A."/>
            <person name="Gocayne J.D."/>
            <person name="Scott J.D."/>
            <person name="Shirley R."/>
            <person name="Liu L.-I."/>
            <person name="Glodek A."/>
            <person name="Kelley J.M."/>
            <person name="Weidman J.F."/>
            <person name="Phillips C.A."/>
            <person name="Spriggs T."/>
            <person name="Hedblom E."/>
            <person name="Cotton M.D."/>
            <person name="Utterback T.R."/>
            <person name="Hanna M.C."/>
            <person name="Nguyen D.T."/>
            <person name="Saudek D.M."/>
            <person name="Brandon R.C."/>
            <person name="Fine L.D."/>
            <person name="Fritchman J.L."/>
            <person name="Fuhrmann J.L."/>
            <person name="Geoghagen N.S.M."/>
            <person name="Gnehm C.L."/>
            <person name="McDonald L.A."/>
            <person name="Small K.V."/>
            <person name="Fraser C.M."/>
            <person name="Smith H.O."/>
            <person name="Venter J.C."/>
        </authorList>
    </citation>
    <scope>NUCLEOTIDE SEQUENCE [LARGE SCALE GENOMIC DNA]</scope>
    <source>
        <strain>ATCC 51907 / DSM 11121 / KW20 / Rd</strain>
    </source>
</reference>
<reference key="2">
    <citation type="journal article" date="2003" name="Nucleic Acids Res.">
        <title>A nomenclature for restriction enzymes, DNA methyltransferases, homing endonucleases and their genes.</title>
        <authorList>
            <person name="Roberts R.J."/>
            <person name="Belfort M."/>
            <person name="Bestor T."/>
            <person name="Bhagwat A.S."/>
            <person name="Bickle T.A."/>
            <person name="Bitinaite J."/>
            <person name="Blumenthal R.M."/>
            <person name="Degtyarev S.K."/>
            <person name="Dryden D.T."/>
            <person name="Dybvig K."/>
            <person name="Firman K."/>
            <person name="Gromova E.S."/>
            <person name="Gumport R.I."/>
            <person name="Halford S.E."/>
            <person name="Hattman S."/>
            <person name="Heitman J."/>
            <person name="Hornby D.P."/>
            <person name="Janulaitis A."/>
            <person name="Jeltsch A."/>
            <person name="Josephsen J."/>
            <person name="Kiss A."/>
            <person name="Klaenhammer T.R."/>
            <person name="Kobayashi I."/>
            <person name="Kong H."/>
            <person name="Krueger D.H."/>
            <person name="Lacks S."/>
            <person name="Marinus M.G."/>
            <person name="Miyahara M."/>
            <person name="Morgan R.D."/>
            <person name="Murray N.E."/>
            <person name="Nagaraja V."/>
            <person name="Piekarowicz A."/>
            <person name="Pingoud A."/>
            <person name="Raleigh E."/>
            <person name="Rao D.N."/>
            <person name="Reich N."/>
            <person name="Repin V.E."/>
            <person name="Selker E.U."/>
            <person name="Shaw P.C."/>
            <person name="Stein D.C."/>
            <person name="Stoddard B.L."/>
            <person name="Szybalski W."/>
            <person name="Trautner T.A."/>
            <person name="Van Etten J.L."/>
            <person name="Vitor J.M."/>
            <person name="Wilson G.G."/>
            <person name="Xu S.Y."/>
        </authorList>
    </citation>
    <scope>NOMENCLATURE</scope>
    <scope>SUBTYPE</scope>
</reference>
<proteinExistence type="inferred from homology"/>
<accession>P71366</accession>
<accession>P44106</accession>
<feature type="chain" id="PRO_0000088033" description="Probable type III restriction-modification enzyme HindVI Mod subunit">
    <location>
        <begin position="1"/>
        <end position="747"/>
    </location>
</feature>
<feature type="region of interest" description="Binding of S-adenosyl methionine" evidence="3">
    <location>
        <begin position="267"/>
        <end position="270"/>
    </location>
</feature>
<dbReference type="EC" id="2.1.1.72"/>
<dbReference type="EMBL" id="L42023">
    <property type="protein sequence ID" value="AAC22722.1"/>
    <property type="status" value="ALT_FRAME"/>
    <property type="molecule type" value="Genomic_DNA"/>
</dbReference>
<dbReference type="EMBL" id="L42023">
    <property type="protein sequence ID" value="AAC22721.1"/>
    <property type="status" value="ALT_FRAME"/>
    <property type="molecule type" value="Genomic_DNA"/>
</dbReference>
<dbReference type="PIR" id="C64180">
    <property type="entry name" value="C64180"/>
</dbReference>
<dbReference type="PIR" id="G64019">
    <property type="entry name" value="G64019"/>
</dbReference>
<dbReference type="RefSeq" id="NP_439215.1">
    <property type="nucleotide sequence ID" value="NC_000907.1"/>
</dbReference>
<dbReference type="RefSeq" id="NP_439216.1">
    <property type="nucleotide sequence ID" value="NC_000907.1"/>
</dbReference>
<dbReference type="STRING" id="71421.HI_1056"/>
<dbReference type="REBASE" id="177015">
    <property type="entry name" value="M.Mph27ORF4193P"/>
</dbReference>
<dbReference type="REBASE" id="203794">
    <property type="entry name" value="M.Ppe892ORF72P"/>
</dbReference>
<dbReference type="REBASE" id="204714">
    <property type="entry name" value="M.Bso1395ORF3709P"/>
</dbReference>
<dbReference type="REBASE" id="3701">
    <property type="entry name" value="M.HindVI"/>
</dbReference>
<dbReference type="EnsemblBacteria" id="AAC22721">
    <property type="protein sequence ID" value="AAC22721"/>
    <property type="gene ID" value="HI_1056"/>
</dbReference>
<dbReference type="EnsemblBacteria" id="AAC22722">
    <property type="protein sequence ID" value="AAC22722"/>
    <property type="gene ID" value="HI_1058"/>
</dbReference>
<dbReference type="KEGG" id="hin:HI_1056"/>
<dbReference type="KEGG" id="hin:HI_1058"/>
<dbReference type="PATRIC" id="fig|71421.8.peg.1101"/>
<dbReference type="eggNOG" id="COG2189">
    <property type="taxonomic scope" value="Bacteria"/>
</dbReference>
<dbReference type="HOGENOM" id="CLU_097494_1_0_6"/>
<dbReference type="OrthoDB" id="9816043at2"/>
<dbReference type="PhylomeDB" id="P71366"/>
<dbReference type="BioCyc" id="HINF71421:G1GJ1-1094-MONOMER"/>
<dbReference type="PRO" id="PR:P71366"/>
<dbReference type="Proteomes" id="UP000000579">
    <property type="component" value="Chromosome"/>
</dbReference>
<dbReference type="GO" id="GO:0003677">
    <property type="term" value="F:DNA binding"/>
    <property type="evidence" value="ECO:0007669"/>
    <property type="project" value="UniProtKB-KW"/>
</dbReference>
<dbReference type="GO" id="GO:0008170">
    <property type="term" value="F:N-methyltransferase activity"/>
    <property type="evidence" value="ECO:0007669"/>
    <property type="project" value="InterPro"/>
</dbReference>
<dbReference type="GO" id="GO:0009007">
    <property type="term" value="F:site-specific DNA-methyltransferase (adenine-specific) activity"/>
    <property type="evidence" value="ECO:0007669"/>
    <property type="project" value="UniProtKB-EC"/>
</dbReference>
<dbReference type="GO" id="GO:0009307">
    <property type="term" value="P:DNA restriction-modification system"/>
    <property type="evidence" value="ECO:0007669"/>
    <property type="project" value="UniProtKB-KW"/>
</dbReference>
<dbReference type="GO" id="GO:0032259">
    <property type="term" value="P:methylation"/>
    <property type="evidence" value="ECO:0007669"/>
    <property type="project" value="UniProtKB-KW"/>
</dbReference>
<dbReference type="Gene3D" id="3.40.50.150">
    <property type="entry name" value="Vaccinia Virus protein VP39"/>
    <property type="match status" value="1"/>
</dbReference>
<dbReference type="InterPro" id="IPR002941">
    <property type="entry name" value="DNA_methylase_N4/N6"/>
</dbReference>
<dbReference type="InterPro" id="IPR002052">
    <property type="entry name" value="DNA_methylase_N6_adenine_CS"/>
</dbReference>
<dbReference type="InterPro" id="IPR002295">
    <property type="entry name" value="N4/N6-MTase_EcoPI_Mod-like"/>
</dbReference>
<dbReference type="InterPro" id="IPR001091">
    <property type="entry name" value="RM_Methyltransferase"/>
</dbReference>
<dbReference type="InterPro" id="IPR029063">
    <property type="entry name" value="SAM-dependent_MTases_sf"/>
</dbReference>
<dbReference type="InterPro" id="IPR022221">
    <property type="entry name" value="TypeIII_RM_meth"/>
</dbReference>
<dbReference type="PANTHER" id="PTHR45598:SF1">
    <property type="entry name" value="4FE-4S FERREDOXIN-TYPE DOMAIN-CONTAINING PROTEIN"/>
    <property type="match status" value="1"/>
</dbReference>
<dbReference type="PANTHER" id="PTHR45598">
    <property type="entry name" value="PROTEIN CBG11839-RELATED"/>
    <property type="match status" value="1"/>
</dbReference>
<dbReference type="Pfam" id="PF01555">
    <property type="entry name" value="N6_N4_Mtase"/>
    <property type="match status" value="1"/>
</dbReference>
<dbReference type="Pfam" id="PF12564">
    <property type="entry name" value="TypeIII_RM_meth"/>
    <property type="match status" value="1"/>
</dbReference>
<dbReference type="PIRSF" id="PIRSF015855">
    <property type="entry name" value="TypeIII_Mtase_mKpnI"/>
    <property type="match status" value="1"/>
</dbReference>
<dbReference type="PRINTS" id="PR00508">
    <property type="entry name" value="S21N4MTFRASE"/>
</dbReference>
<dbReference type="SUPFAM" id="SSF53335">
    <property type="entry name" value="S-adenosyl-L-methionine-dependent methyltransferases"/>
    <property type="match status" value="1"/>
</dbReference>
<dbReference type="PROSITE" id="PS00092">
    <property type="entry name" value="N6_MTASE"/>
    <property type="match status" value="1"/>
</dbReference>
<sequence>MKTDIQTELTQALLSHEKVWANEEKTILAKNILLDLVEKTDPTIIGLLLGNDDLKRHFFVEVNGVLVFKLQDFRFFLDKHSINNSYTKYANRIGLTDGNRFLKDSSDIVLDFPFKDCVLNGGQSTEEGEEIYFKRNNSQSVSQSVSQSVSQSVSQSVSQSVSQSVSQSVSQSVSQSVSQLYTKLTRKRQEIFFNQTLAFDEIDRLFDAKAFSKFSRYTADGKQAVGEIKRHSDGTPAENLIIKGNNLIALHSLAKQFKGKVKLIYIDPPYNTGNDGFKYNDKFNHSTWLTFMKNRLEIAKTLLADDGVIFVQCDDIEQAYLKILMDDIFDRDNFLNIVTVKTKIGGVSGSSEGKSLKDSTEFINVFSKNRERLFLNPVYQKTEVNEFIKNYEDSGKSWKYTQVLIDLGEKILLEEKDGFKYYHYPNAQMTSIVKFSQDQNLSKEIIYTEYSHKVYRTTNAQSSIRSKIIEDLYSIKNGIVSIEYIPQKGKNAGNLIEVFYNASNKDMFMFLSDMLIKEKNKYFYLQKVNTLWDDIQYNNLNKEGGYIDFKNGKKPEALLRRIIDMTTKEGDIVLDYHLGSGTTAAVAHKMNRQYIGIEQMDYIETLAVERLKKVIDGEQGGISKAVNWQGGGEFVYAELAPFNETAKQQILACEDSDDIKTLFEDLCERYFLKYNVSVKEFSQIIEEPEFQSLPLDEQKQMVLEMLDLNQMYVSLSEMDDEQFAGCLNDDDKALSRAFYQAEKKDGE</sequence>
<keyword id="KW-0238">DNA-binding</keyword>
<keyword id="KW-0489">Methyltransferase</keyword>
<keyword id="KW-1185">Reference proteome</keyword>
<keyword id="KW-0680">Restriction system</keyword>
<keyword id="KW-0949">S-adenosyl-L-methionine</keyword>
<keyword id="KW-0808">Transferase</keyword>
<protein>
    <recommendedName>
        <fullName evidence="4">Probable type III restriction-modification enzyme HindVI Mod subunit</fullName>
        <shortName>M.HindVI</shortName>
        <ecNumber>2.1.1.72</ecNumber>
    </recommendedName>
    <alternativeName>
        <fullName>Probable HindVI methyltransferase</fullName>
    </alternativeName>
    <alternativeName>
        <fullName evidence="4">Probable type III methyltransferase M.HindVI</fullName>
    </alternativeName>
</protein>
<organism>
    <name type="scientific">Haemophilus influenzae (strain ATCC 51907 / DSM 11121 / KW20 / Rd)</name>
    <dbReference type="NCBI Taxonomy" id="71421"/>
    <lineage>
        <taxon>Bacteria</taxon>
        <taxon>Pseudomonadati</taxon>
        <taxon>Pseudomonadota</taxon>
        <taxon>Gammaproteobacteria</taxon>
        <taxon>Pasteurellales</taxon>
        <taxon>Pasteurellaceae</taxon>
        <taxon>Haemophilus</taxon>
    </lineage>
</organism>
<comment type="function">
    <text evidence="1 4">A beta subtype methylase that binds the system-specific DNA recognition site 5'-CGAAT-3' and methylates A-4 (of only 1 strand). DNA restriction requires both the Res and Mod subunits.</text>
</comment>
<comment type="catalytic activity">
    <reaction>
        <text>a 2'-deoxyadenosine in DNA + S-adenosyl-L-methionine = an N(6)-methyl-2'-deoxyadenosine in DNA + S-adenosyl-L-homocysteine + H(+)</text>
        <dbReference type="Rhea" id="RHEA:15197"/>
        <dbReference type="Rhea" id="RHEA-COMP:12418"/>
        <dbReference type="Rhea" id="RHEA-COMP:12419"/>
        <dbReference type="ChEBI" id="CHEBI:15378"/>
        <dbReference type="ChEBI" id="CHEBI:57856"/>
        <dbReference type="ChEBI" id="CHEBI:59789"/>
        <dbReference type="ChEBI" id="CHEBI:90615"/>
        <dbReference type="ChEBI" id="CHEBI:90616"/>
        <dbReference type="EC" id="2.1.1.72"/>
    </reaction>
</comment>
<comment type="subunit">
    <text evidence="2">Homodimer, also forms a functional restriction-competent complex with Res.</text>
</comment>
<comment type="similarity">
    <text evidence="5">Belongs to the N(4)/N(6)-methyltransferase family.</text>
</comment>
<comment type="sequence caution" evidence="5">
    <conflict type="frameshift">
        <sequence resource="EMBL-CDS" id="AAC22721"/>
    </conflict>
</comment>
<comment type="sequence caution" evidence="5">
    <conflict type="frameshift">
        <sequence resource="EMBL-CDS" id="AAC22722"/>
    </conflict>
</comment>
<evidence type="ECO:0000250" key="1">
    <source>
        <dbReference type="UniProtKB" id="P08763"/>
    </source>
</evidence>
<evidence type="ECO:0000250" key="2">
    <source>
        <dbReference type="UniProtKB" id="P12364"/>
    </source>
</evidence>
<evidence type="ECO:0000255" key="3"/>
<evidence type="ECO:0000303" key="4">
    <source>
    </source>
</evidence>
<evidence type="ECO:0000305" key="5"/>